<keyword id="KW-0150">Chloroplast</keyword>
<keyword id="KW-0240">DNA-directed RNA polymerase</keyword>
<keyword id="KW-0479">Metal-binding</keyword>
<keyword id="KW-0548">Nucleotidyltransferase</keyword>
<keyword id="KW-0934">Plastid</keyword>
<keyword id="KW-0804">Transcription</keyword>
<keyword id="KW-0808">Transferase</keyword>
<keyword id="KW-0862">Zinc</keyword>
<sequence length="1414" mass="162167">MADQAKLLFYNKMMDRTAIKHLIRRLISHFGITFTANILDQIKTLGFHQATNASISLGIDDLLTAPLKSWLIQDAEKQGYSSEQHHRYGSVHSVEKLRQLIETWYATSEYLKQEMNPNFRMTDPLNPVHMMSFSGARGSISQVHQLVGMRGLMSDPQGQIIDLPIQNNFREGLSLTEYIISCYGARKGVVDTAVRTSDAGYLTRRLVEVVQHIVVRKKDCGTLRGILLNSNRDGRRSIQPFSQQRLIGRVLADNLYVNMRCIATRNQDISNELARRLVISQVRQIYIRSPLTCKSMFCICQLCYGWNLTYNHLVELGEAVGIIAGQSIGEPGTQLTLRTFHTGGVFTGDIAEHIRTPFNGIIKFDEDLVYATRTRHGHPAWLCQDNLPVSIESKEKIHNFIVPAQSLLLVQNNQYVGSKQVIGQIRTTKSPLKERVKKPIYSNLDGELHWDTTVRHLSEHIHNNIHRVVKSGHIWILSGKLHNLSKTSLFFYQNQDKIHVQSPSITNYKSLPNSSEKDTKRDLDFIDSNIAKKESQTSNFGFSFSKITPNPSDSTNILSNIELKRNRRKNRVILLLGRVKSRYRKKSYSSFVLDIPNNGILNQGDILAISESPQYQTEISGIIKYGTIKVDSVGKREYIGDNEKTTTFRSRYKILKGGNFFLIPEEVYTIYQPSSHIFVSNNSIIEPGTQITFNITSRGGGLVQIKKVRKIFEIRILPGNIYYPKRLHKISKQTDILIPPGQKIFDEFKSDNWIYLQWITPYRKKTFLPVRPVLEYIISNHSFIEISSTFTYSRYRDIIQVQAAEYIFYEDGEEVRIRNNTSSIQLVQTCLVVNWKEPSIVRVAYVSPIEIRFNNILKTFLQISLIEFSNAYVEKGNSRASLKRLFSNQPFYSNNANNHLLSQFPINHPGVVRRLSDQGTDRSFVVLLPSDSYQSFYSPCHDGRNRRKQFVESRYKISFCEKEISERSNTLFLSFNRKKFLKLKEKLTNSFSSFDHHCMMQTTERLGLLGTVHSIAHYSLYSHRIINKNFFLSKDLDIDNSRAISQNSNWYILDENRVICGFDLIDSTQEDLSNRPHYLSVPCDVIIPFVNLGQFICEGVSLYEHETSYQSGQIIAIYQESVMIRLSKPYLATKGATVHSNYGDILKEGDTLITLIYERLRSGDIIQGLPKVEQLLEARSINSVSLDLEKNFLFWNNTMIRLVGNFWSHFLGVKTSIEQCQLFLVNKVQKVYRSQGVQISDKHIEIIVRQMTSKVITLEDGMANVFSPGELIELSRAQRMNRALKESISHKPIVLGMTKASLNTTSFISEASFQETTRVLARAALQGRIDWLKGLKENVVPGSVVPTGTGSREVICQIDIEKRKELGLLKTKNNKIFIRKIRDIFFYHEKVSISKNPKYIHMRLKKPVLKEINI</sequence>
<protein>
    <recommendedName>
        <fullName evidence="1">DNA-directed RNA polymerase subunit beta''</fullName>
        <ecNumber evidence="1">2.7.7.6</ecNumber>
    </recommendedName>
    <alternativeName>
        <fullName evidence="1">PEP</fullName>
    </alternativeName>
    <alternativeName>
        <fullName evidence="1">Plastid-encoded RNA polymerase subunit beta''</fullName>
        <shortName evidence="1">RNA polymerase subunit beta''</shortName>
    </alternativeName>
</protein>
<geneLocation type="chloroplast"/>
<proteinExistence type="inferred from homology"/>
<comment type="function">
    <text evidence="1">DNA-dependent RNA polymerase catalyzes the transcription of DNA into RNA using the four ribonucleoside triphosphates as substrates.</text>
</comment>
<comment type="catalytic activity">
    <reaction evidence="1">
        <text>RNA(n) + a ribonucleoside 5'-triphosphate = RNA(n+1) + diphosphate</text>
        <dbReference type="Rhea" id="RHEA:21248"/>
        <dbReference type="Rhea" id="RHEA-COMP:14527"/>
        <dbReference type="Rhea" id="RHEA-COMP:17342"/>
        <dbReference type="ChEBI" id="CHEBI:33019"/>
        <dbReference type="ChEBI" id="CHEBI:61557"/>
        <dbReference type="ChEBI" id="CHEBI:140395"/>
        <dbReference type="EC" id="2.7.7.6"/>
    </reaction>
</comment>
<comment type="cofactor">
    <cofactor evidence="1">
        <name>Zn(2+)</name>
        <dbReference type="ChEBI" id="CHEBI:29105"/>
    </cofactor>
    <text evidence="1">Binds 1 Zn(2+) ion per subunit.</text>
</comment>
<comment type="subunit">
    <text evidence="1">In plastids the minimal PEP RNA polymerase catalytic core is composed of four subunits: alpha, beta, beta', and beta''. When a (nuclear-encoded) sigma factor is associated with the core the holoenzyme is formed, which can initiate transcription.</text>
</comment>
<comment type="subcellular location">
    <subcellularLocation>
        <location evidence="1">Plastid</location>
        <location evidence="1">Chloroplast</location>
    </subcellularLocation>
</comment>
<comment type="similarity">
    <text evidence="1">Belongs to the RNA polymerase beta' chain family. RpoC2 subfamily.</text>
</comment>
<gene>
    <name evidence="1" type="primary">rpoC2</name>
</gene>
<evidence type="ECO:0000255" key="1">
    <source>
        <dbReference type="HAMAP-Rule" id="MF_01324"/>
    </source>
</evidence>
<organism>
    <name type="scientific">Angiopteris evecta</name>
    <name type="common">Mule's foot fern</name>
    <name type="synonym">Polypodium evectum</name>
    <dbReference type="NCBI Taxonomy" id="13825"/>
    <lineage>
        <taxon>Eukaryota</taxon>
        <taxon>Viridiplantae</taxon>
        <taxon>Streptophyta</taxon>
        <taxon>Embryophyta</taxon>
        <taxon>Tracheophyta</taxon>
        <taxon>Polypodiopsida</taxon>
        <taxon>Marattiidae</taxon>
        <taxon>Marattiales</taxon>
        <taxon>Marattiaceae</taxon>
        <taxon>Angiopteris</taxon>
    </lineage>
</organism>
<dbReference type="EC" id="2.7.7.6" evidence="1"/>
<dbReference type="EMBL" id="DQ821119">
    <property type="protein sequence ID" value="ABG79589.1"/>
    <property type="molecule type" value="Genomic_DNA"/>
</dbReference>
<dbReference type="RefSeq" id="YP_001023690.1">
    <property type="nucleotide sequence ID" value="NC_008829.1"/>
</dbReference>
<dbReference type="SMR" id="A2T322"/>
<dbReference type="GeneID" id="4788131"/>
<dbReference type="GO" id="GO:0009507">
    <property type="term" value="C:chloroplast"/>
    <property type="evidence" value="ECO:0007669"/>
    <property type="project" value="UniProtKB-SubCell"/>
</dbReference>
<dbReference type="GO" id="GO:0000428">
    <property type="term" value="C:DNA-directed RNA polymerase complex"/>
    <property type="evidence" value="ECO:0007669"/>
    <property type="project" value="UniProtKB-KW"/>
</dbReference>
<dbReference type="GO" id="GO:0005739">
    <property type="term" value="C:mitochondrion"/>
    <property type="evidence" value="ECO:0007669"/>
    <property type="project" value="GOC"/>
</dbReference>
<dbReference type="GO" id="GO:0003677">
    <property type="term" value="F:DNA binding"/>
    <property type="evidence" value="ECO:0007669"/>
    <property type="project" value="UniProtKB-UniRule"/>
</dbReference>
<dbReference type="GO" id="GO:0003899">
    <property type="term" value="F:DNA-directed RNA polymerase activity"/>
    <property type="evidence" value="ECO:0007669"/>
    <property type="project" value="UniProtKB-UniRule"/>
</dbReference>
<dbReference type="GO" id="GO:0008270">
    <property type="term" value="F:zinc ion binding"/>
    <property type="evidence" value="ECO:0007669"/>
    <property type="project" value="UniProtKB-UniRule"/>
</dbReference>
<dbReference type="GO" id="GO:0006351">
    <property type="term" value="P:DNA-templated transcription"/>
    <property type="evidence" value="ECO:0007669"/>
    <property type="project" value="UniProtKB-UniRule"/>
</dbReference>
<dbReference type="CDD" id="cd02655">
    <property type="entry name" value="RNAP_beta'_C"/>
    <property type="match status" value="1"/>
</dbReference>
<dbReference type="Gene3D" id="1.10.132.30">
    <property type="match status" value="1"/>
</dbReference>
<dbReference type="Gene3D" id="1.10.150.390">
    <property type="match status" value="1"/>
</dbReference>
<dbReference type="Gene3D" id="1.10.1790.20">
    <property type="match status" value="1"/>
</dbReference>
<dbReference type="Gene3D" id="1.10.274.100">
    <property type="entry name" value="RNA polymerase Rpb1, domain 3"/>
    <property type="match status" value="1"/>
</dbReference>
<dbReference type="HAMAP" id="MF_01324">
    <property type="entry name" value="RNApol_bact_RpoC2"/>
    <property type="match status" value="1"/>
</dbReference>
<dbReference type="InterPro" id="IPR012756">
    <property type="entry name" value="DNA-dir_RpoC2_beta_pp"/>
</dbReference>
<dbReference type="InterPro" id="IPR050254">
    <property type="entry name" value="RNA_pol_beta''_euk"/>
</dbReference>
<dbReference type="InterPro" id="IPR042102">
    <property type="entry name" value="RNA_pol_Rpb1_3_sf"/>
</dbReference>
<dbReference type="InterPro" id="IPR007083">
    <property type="entry name" value="RNA_pol_Rpb1_4"/>
</dbReference>
<dbReference type="InterPro" id="IPR007081">
    <property type="entry name" value="RNA_pol_Rpb1_5"/>
</dbReference>
<dbReference type="InterPro" id="IPR038120">
    <property type="entry name" value="Rpb1_funnel_sf"/>
</dbReference>
<dbReference type="NCBIfam" id="TIGR02388">
    <property type="entry name" value="rpoC2_cyan"/>
    <property type="match status" value="1"/>
</dbReference>
<dbReference type="PANTHER" id="PTHR34995">
    <property type="entry name" value="DNA-DIRECTED RNA POLYMERASE SUBUNIT BETA"/>
    <property type="match status" value="1"/>
</dbReference>
<dbReference type="PANTHER" id="PTHR34995:SF1">
    <property type="entry name" value="DNA-DIRECTED RNA POLYMERASE SUBUNIT BETA"/>
    <property type="match status" value="1"/>
</dbReference>
<dbReference type="Pfam" id="PF05000">
    <property type="entry name" value="RNA_pol_Rpb1_4"/>
    <property type="match status" value="1"/>
</dbReference>
<dbReference type="Pfam" id="PF04998">
    <property type="entry name" value="RNA_pol_Rpb1_5"/>
    <property type="match status" value="2"/>
</dbReference>
<dbReference type="SUPFAM" id="SSF64484">
    <property type="entry name" value="beta and beta-prime subunits of DNA dependent RNA-polymerase"/>
    <property type="match status" value="1"/>
</dbReference>
<accession>A2T322</accession>
<reference key="1">
    <citation type="journal article" date="2007" name="Am. Fern J.">
        <title>The complete plastid genome sequence of Angiopteris evecta (G. Forst.) Hoffm. (Marattiaceae).</title>
        <authorList>
            <person name="Roper J.M."/>
            <person name="Hansen S.K."/>
            <person name="Wolf P.G."/>
            <person name="Karol K.G."/>
            <person name="Mandoli D.F."/>
            <person name="Everett K.D.E."/>
            <person name="Kuehl J.V."/>
            <person name="Boore J.L."/>
        </authorList>
    </citation>
    <scope>NUCLEOTIDE SEQUENCE [LARGE SCALE GENOMIC DNA]</scope>
</reference>
<name>RPOC2_ANGEV</name>
<feature type="chain" id="PRO_0000353545" description="DNA-directed RNA polymerase subunit beta''">
    <location>
        <begin position="1"/>
        <end position="1414"/>
    </location>
</feature>
<feature type="binding site" evidence="1">
    <location>
        <position position="220"/>
    </location>
    <ligand>
        <name>Zn(2+)</name>
        <dbReference type="ChEBI" id="CHEBI:29105"/>
    </ligand>
</feature>
<feature type="binding site" evidence="1">
    <location>
        <position position="293"/>
    </location>
    <ligand>
        <name>Zn(2+)</name>
        <dbReference type="ChEBI" id="CHEBI:29105"/>
    </ligand>
</feature>
<feature type="binding site" evidence="1">
    <location>
        <position position="300"/>
    </location>
    <ligand>
        <name>Zn(2+)</name>
        <dbReference type="ChEBI" id="CHEBI:29105"/>
    </ligand>
</feature>
<feature type="binding site" evidence="1">
    <location>
        <position position="303"/>
    </location>
    <ligand>
        <name>Zn(2+)</name>
        <dbReference type="ChEBI" id="CHEBI:29105"/>
    </ligand>
</feature>